<evidence type="ECO:0000250" key="1">
    <source>
        <dbReference type="UniProtKB" id="O43236"/>
    </source>
</evidence>
<evidence type="ECO:0000250" key="2">
    <source>
        <dbReference type="UniProtKB" id="Q9UH03"/>
    </source>
</evidence>
<evidence type="ECO:0000255" key="3"/>
<evidence type="ECO:0000255" key="4">
    <source>
        <dbReference type="PROSITE-ProRule" id="PRU01056"/>
    </source>
</evidence>
<evidence type="ECO:0000256" key="5">
    <source>
        <dbReference type="SAM" id="MobiDB-lite"/>
    </source>
</evidence>
<evidence type="ECO:0000269" key="6">
    <source>
    </source>
</evidence>
<evidence type="ECO:0000269" key="7">
    <source>
    </source>
</evidence>
<evidence type="ECO:0000269" key="8">
    <source>
    </source>
</evidence>
<evidence type="ECO:0000269" key="9">
    <source>
    </source>
</evidence>
<evidence type="ECO:0000269" key="10">
    <source>
    </source>
</evidence>
<evidence type="ECO:0000269" key="11">
    <source>
    </source>
</evidence>
<evidence type="ECO:0000269" key="12">
    <source>
    </source>
</evidence>
<evidence type="ECO:0000269" key="13">
    <source>
    </source>
</evidence>
<evidence type="ECO:0000269" key="14">
    <source>
    </source>
</evidence>
<evidence type="ECO:0000269" key="15">
    <source>
    </source>
</evidence>
<evidence type="ECO:0000269" key="16">
    <source>
    </source>
</evidence>
<evidence type="ECO:0000269" key="17">
    <source>
    </source>
</evidence>
<evidence type="ECO:0000269" key="18">
    <source>
    </source>
</evidence>
<evidence type="ECO:0000269" key="19">
    <source>
    </source>
</evidence>
<evidence type="ECO:0000303" key="20">
    <source>
    </source>
</evidence>
<evidence type="ECO:0000303" key="21">
    <source>
    </source>
</evidence>
<evidence type="ECO:0000303" key="22">
    <source>
    </source>
</evidence>
<evidence type="ECO:0000303" key="23">
    <source>
    </source>
</evidence>
<evidence type="ECO:0000305" key="24"/>
<evidence type="ECO:0000312" key="25">
    <source>
        <dbReference type="MGI" id="MGI:1270156"/>
    </source>
</evidence>
<evidence type="ECO:0007744" key="26">
    <source>
    </source>
</evidence>
<evidence type="ECO:0007744" key="27">
    <source>
    </source>
</evidence>
<evidence type="ECO:0007744" key="28">
    <source>
    </source>
</evidence>
<accession>P28661</accession>
<accession>B2KGM3</accession>
<accession>B2KGM6</accession>
<accession>Q3UVH1</accession>
<accession>Q3UZC3</accession>
<accession>Q5ND10</accession>
<accession>Q5ND15</accession>
<accession>Q5ND16</accession>
<accession>Q5ND19</accession>
<accession>Q7TPM7</accession>
<accession>Q80VX1</accession>
<organism>
    <name type="scientific">Mus musculus</name>
    <name type="common">Mouse</name>
    <dbReference type="NCBI Taxonomy" id="10090"/>
    <lineage>
        <taxon>Eukaryota</taxon>
        <taxon>Metazoa</taxon>
        <taxon>Chordata</taxon>
        <taxon>Craniata</taxon>
        <taxon>Vertebrata</taxon>
        <taxon>Euteleostomi</taxon>
        <taxon>Mammalia</taxon>
        <taxon>Eutheria</taxon>
        <taxon>Euarchontoglires</taxon>
        <taxon>Glires</taxon>
        <taxon>Rodentia</taxon>
        <taxon>Myomorpha</taxon>
        <taxon>Muroidea</taxon>
        <taxon>Muridae</taxon>
        <taxon>Murinae</taxon>
        <taxon>Mus</taxon>
        <taxon>Mus</taxon>
    </lineage>
</organism>
<dbReference type="EMBL" id="X61452">
    <property type="protein sequence ID" value="CAA43692.1"/>
    <property type="molecule type" value="mRNA"/>
</dbReference>
<dbReference type="EMBL" id="AB078010">
    <property type="protein sequence ID" value="BAC55241.1"/>
    <property type="molecule type" value="mRNA"/>
</dbReference>
<dbReference type="EMBL" id="AK133933">
    <property type="protein sequence ID" value="BAE21934.1"/>
    <property type="molecule type" value="mRNA"/>
</dbReference>
<dbReference type="EMBL" id="AK135143">
    <property type="protein sequence ID" value="BAE22437.1"/>
    <property type="molecule type" value="mRNA"/>
</dbReference>
<dbReference type="EMBL" id="AK137299">
    <property type="protein sequence ID" value="BAE23298.1"/>
    <property type="molecule type" value="mRNA"/>
</dbReference>
<dbReference type="EMBL" id="AL596086">
    <property type="status" value="NOT_ANNOTATED_CDS"/>
    <property type="molecule type" value="Genomic_DNA"/>
</dbReference>
<dbReference type="EMBL" id="CU406988">
    <property type="status" value="NOT_ANNOTATED_CDS"/>
    <property type="molecule type" value="Genomic_DNA"/>
</dbReference>
<dbReference type="EMBL" id="CH466556">
    <property type="protein sequence ID" value="EDL15822.1"/>
    <property type="molecule type" value="Genomic_DNA"/>
</dbReference>
<dbReference type="EMBL" id="BC055101">
    <property type="protein sequence ID" value="AAH55101.1"/>
    <property type="molecule type" value="mRNA"/>
</dbReference>
<dbReference type="CCDS" id="CCDS25213.1">
    <molecule id="P28661-1"/>
</dbReference>
<dbReference type="CCDS" id="CCDS70275.1">
    <molecule id="P28661-5"/>
</dbReference>
<dbReference type="CCDS" id="CCDS70276.1">
    <molecule id="P28661-3"/>
</dbReference>
<dbReference type="CCDS" id="CCDS70277.1">
    <molecule id="P28661-4"/>
</dbReference>
<dbReference type="CCDS" id="CCDS88214.1">
    <molecule id="P28661-2"/>
</dbReference>
<dbReference type="PIR" id="S16867">
    <property type="entry name" value="S16867"/>
</dbReference>
<dbReference type="RefSeq" id="NP_001271321.1">
    <molecule id="P28661-4"/>
    <property type="nucleotide sequence ID" value="NM_001284392.2"/>
</dbReference>
<dbReference type="RefSeq" id="NP_001271323.1">
    <molecule id="P28661-3"/>
    <property type="nucleotide sequence ID" value="NM_001284394.2"/>
</dbReference>
<dbReference type="RefSeq" id="NP_001271327.1">
    <molecule id="P28661-5"/>
    <property type="nucleotide sequence ID" value="NM_001284398.2"/>
</dbReference>
<dbReference type="RefSeq" id="NP_001348865.1">
    <molecule id="P28661-2"/>
    <property type="nucleotide sequence ID" value="NM_001361936.2"/>
</dbReference>
<dbReference type="RefSeq" id="NP_035259.1">
    <molecule id="P28661-1"/>
    <property type="nucleotide sequence ID" value="NM_011129.3"/>
</dbReference>
<dbReference type="RefSeq" id="XP_006532561.1">
    <property type="nucleotide sequence ID" value="XM_006532498.3"/>
</dbReference>
<dbReference type="SMR" id="P28661"/>
<dbReference type="BioGRID" id="202286">
    <property type="interactions" value="17"/>
</dbReference>
<dbReference type="FunCoup" id="P28661">
    <property type="interactions" value="322"/>
</dbReference>
<dbReference type="IntAct" id="P28661">
    <property type="interactions" value="1"/>
</dbReference>
<dbReference type="STRING" id="10090.ENSMUSP00000018544"/>
<dbReference type="iPTMnet" id="P28661"/>
<dbReference type="PhosphoSitePlus" id="P28661"/>
<dbReference type="SwissPalm" id="P28661"/>
<dbReference type="jPOST" id="P28661"/>
<dbReference type="PaxDb" id="10090-ENSMUSP00000053087"/>
<dbReference type="PeptideAtlas" id="P28661"/>
<dbReference type="ProteomicsDB" id="255382">
    <molecule id="P28661-1"/>
</dbReference>
<dbReference type="ProteomicsDB" id="255383">
    <molecule id="P28661-2"/>
</dbReference>
<dbReference type="ProteomicsDB" id="255384">
    <molecule id="P28661-3"/>
</dbReference>
<dbReference type="ProteomicsDB" id="255385">
    <molecule id="P28661-4"/>
</dbReference>
<dbReference type="ProteomicsDB" id="255386">
    <molecule id="P28661-5"/>
</dbReference>
<dbReference type="ProteomicsDB" id="255387">
    <molecule id="P28661-6"/>
</dbReference>
<dbReference type="ProteomicsDB" id="284159"/>
<dbReference type="DNASU" id="18952"/>
<dbReference type="Ensembl" id="ENSMUST00000018544.12">
    <molecule id="P28661-1"/>
    <property type="protein sequence ID" value="ENSMUSP00000018544.6"/>
    <property type="gene ID" value="ENSMUSG00000020486.20"/>
</dbReference>
<dbReference type="Ensembl" id="ENSMUST00000060360.7">
    <molecule id="P28661-7"/>
    <property type="protein sequence ID" value="ENSMUSP00000053087.6"/>
    <property type="gene ID" value="ENSMUSG00000020486.20"/>
</dbReference>
<dbReference type="Ensembl" id="ENSMUST00000063156.11">
    <molecule id="P28661-4"/>
    <property type="protein sequence ID" value="ENSMUSP00000060127.5"/>
    <property type="gene ID" value="ENSMUSG00000020486.20"/>
</dbReference>
<dbReference type="Ensembl" id="ENSMUST00000107960.8">
    <molecule id="P28661-3"/>
    <property type="protein sequence ID" value="ENSMUSP00000103594.2"/>
    <property type="gene ID" value="ENSMUSG00000020486.20"/>
</dbReference>
<dbReference type="Ensembl" id="ENSMUST00000107962.8">
    <molecule id="P28661-2"/>
    <property type="protein sequence ID" value="ENSMUSP00000103596.2"/>
    <property type="gene ID" value="ENSMUSG00000020486.20"/>
</dbReference>
<dbReference type="Ensembl" id="ENSMUST00000122067.8">
    <molecule id="P28661-5"/>
    <property type="protein sequence ID" value="ENSMUSP00000112960.2"/>
    <property type="gene ID" value="ENSMUSG00000020486.20"/>
</dbReference>
<dbReference type="GeneID" id="18952"/>
<dbReference type="KEGG" id="mmu:18952"/>
<dbReference type="UCSC" id="uc007kts.2">
    <molecule id="P28661-6"/>
    <property type="organism name" value="mouse"/>
</dbReference>
<dbReference type="UCSC" id="uc007ktu.2">
    <molecule id="P28661-5"/>
    <property type="organism name" value="mouse"/>
</dbReference>
<dbReference type="UCSC" id="uc007ktw.2">
    <molecule id="P28661-1"/>
    <property type="organism name" value="mouse"/>
</dbReference>
<dbReference type="UCSC" id="uc007ktx.2">
    <molecule id="P28661-3"/>
    <property type="organism name" value="mouse"/>
</dbReference>
<dbReference type="UCSC" id="uc007kty.2">
    <molecule id="P28661-4"/>
    <property type="organism name" value="mouse"/>
</dbReference>
<dbReference type="AGR" id="MGI:1270156"/>
<dbReference type="CTD" id="5414"/>
<dbReference type="MGI" id="MGI:1270156">
    <property type="gene designation" value="Septin4"/>
</dbReference>
<dbReference type="VEuPathDB" id="HostDB:ENSMUSG00000020486"/>
<dbReference type="eggNOG" id="ENOG502SETZ">
    <property type="taxonomic scope" value="Eukaryota"/>
</dbReference>
<dbReference type="eggNOG" id="KOG2655">
    <property type="taxonomic scope" value="Eukaryota"/>
</dbReference>
<dbReference type="GeneTree" id="ENSGT00940000157152"/>
<dbReference type="HOGENOM" id="CLU_575631_0_0_1"/>
<dbReference type="InParanoid" id="P28661"/>
<dbReference type="OrthoDB" id="416553at2759"/>
<dbReference type="PhylomeDB" id="P28661"/>
<dbReference type="TreeFam" id="TF101079"/>
<dbReference type="TreeFam" id="TF338016"/>
<dbReference type="Reactome" id="R-MMU-111457">
    <property type="pathway name" value="Release of apoptotic factors from the mitochondria"/>
</dbReference>
<dbReference type="Reactome" id="R-MMU-111469">
    <property type="pathway name" value="SMAC, XIAP-regulated apoptotic response"/>
</dbReference>
<dbReference type="BioGRID-ORCS" id="18952">
    <property type="hits" value="0 hits in 48 CRISPR screens"/>
</dbReference>
<dbReference type="CD-CODE" id="CE726F99">
    <property type="entry name" value="Postsynaptic density"/>
</dbReference>
<dbReference type="ChiTaRS" id="Sept4">
    <property type="organism name" value="mouse"/>
</dbReference>
<dbReference type="PRO" id="PR:Q5ND19"/>
<dbReference type="Proteomes" id="UP000000589">
    <property type="component" value="Chromosome 11"/>
</dbReference>
<dbReference type="RNAct" id="P28661">
    <property type="molecule type" value="protein"/>
</dbReference>
<dbReference type="Bgee" id="ENSMUSG00000020486">
    <property type="expression patterns" value="Expressed in cerebellum lobe and 256 other cell types or tissues"/>
</dbReference>
<dbReference type="ExpressionAtlas" id="P28661">
    <property type="expression patterns" value="baseline and differential"/>
</dbReference>
<dbReference type="GO" id="GO:0030424">
    <property type="term" value="C:axon"/>
    <property type="evidence" value="ECO:0000314"/>
    <property type="project" value="UniProtKB"/>
</dbReference>
<dbReference type="GO" id="GO:0043679">
    <property type="term" value="C:axon terminus"/>
    <property type="evidence" value="ECO:0000314"/>
    <property type="project" value="UniProtKB"/>
</dbReference>
<dbReference type="GO" id="GO:0042995">
    <property type="term" value="C:cell projection"/>
    <property type="evidence" value="ECO:0000314"/>
    <property type="project" value="MGI"/>
</dbReference>
<dbReference type="GO" id="GO:0005737">
    <property type="term" value="C:cytoplasm"/>
    <property type="evidence" value="ECO:0000314"/>
    <property type="project" value="UniProtKB"/>
</dbReference>
<dbReference type="GO" id="GO:0005829">
    <property type="term" value="C:cytosol"/>
    <property type="evidence" value="ECO:0007669"/>
    <property type="project" value="UniProtKB-SubCell"/>
</dbReference>
<dbReference type="GO" id="GO:0030425">
    <property type="term" value="C:dendrite"/>
    <property type="evidence" value="ECO:0000314"/>
    <property type="project" value="UniProtKB"/>
</dbReference>
<dbReference type="GO" id="GO:0005739">
    <property type="term" value="C:mitochondrion"/>
    <property type="evidence" value="ECO:0007005"/>
    <property type="project" value="MGI"/>
</dbReference>
<dbReference type="GO" id="GO:0031514">
    <property type="term" value="C:motile cilium"/>
    <property type="evidence" value="ECO:0000315"/>
    <property type="project" value="MGI"/>
</dbReference>
<dbReference type="GO" id="GO:0043209">
    <property type="term" value="C:myelin sheath"/>
    <property type="evidence" value="ECO:0007005"/>
    <property type="project" value="UniProtKB"/>
</dbReference>
<dbReference type="GO" id="GO:0043204">
    <property type="term" value="C:perikaryon"/>
    <property type="evidence" value="ECO:0000314"/>
    <property type="project" value="UniProtKB"/>
</dbReference>
<dbReference type="GO" id="GO:0031105">
    <property type="term" value="C:septin complex"/>
    <property type="evidence" value="ECO:0000314"/>
    <property type="project" value="UniProtKB"/>
</dbReference>
<dbReference type="GO" id="GO:0097227">
    <property type="term" value="C:sperm annulus"/>
    <property type="evidence" value="ECO:0000314"/>
    <property type="project" value="UniProtKB"/>
</dbReference>
<dbReference type="GO" id="GO:0036126">
    <property type="term" value="C:sperm flagellum"/>
    <property type="evidence" value="ECO:0000314"/>
    <property type="project" value="MGI"/>
</dbReference>
<dbReference type="GO" id="GO:0030133">
    <property type="term" value="C:transport vesicle"/>
    <property type="evidence" value="ECO:0007669"/>
    <property type="project" value="UniProtKB-SubCell"/>
</dbReference>
<dbReference type="GO" id="GO:0005525">
    <property type="term" value="F:GTP binding"/>
    <property type="evidence" value="ECO:0007669"/>
    <property type="project" value="UniProtKB-KW"/>
</dbReference>
<dbReference type="GO" id="GO:0007420">
    <property type="term" value="P:brain development"/>
    <property type="evidence" value="ECO:0000315"/>
    <property type="project" value="MGI"/>
</dbReference>
<dbReference type="GO" id="GO:0051301">
    <property type="term" value="P:cell division"/>
    <property type="evidence" value="ECO:0007669"/>
    <property type="project" value="UniProtKB-KW"/>
</dbReference>
<dbReference type="GO" id="GO:0030317">
    <property type="term" value="P:flagellated sperm motility"/>
    <property type="evidence" value="ECO:0000315"/>
    <property type="project" value="UniProtKB"/>
</dbReference>
<dbReference type="GO" id="GO:0061484">
    <property type="term" value="P:hematopoietic stem cell homeostasis"/>
    <property type="evidence" value="ECO:0000315"/>
    <property type="project" value="UniProtKB"/>
</dbReference>
<dbReference type="GO" id="GO:2000647">
    <property type="term" value="P:negative regulation of stem cell proliferation"/>
    <property type="evidence" value="ECO:0000315"/>
    <property type="project" value="UniProtKB"/>
</dbReference>
<dbReference type="GO" id="GO:0001764">
    <property type="term" value="P:neuron migration"/>
    <property type="evidence" value="ECO:0000315"/>
    <property type="project" value="UniProtKB"/>
</dbReference>
<dbReference type="GO" id="GO:0048240">
    <property type="term" value="P:sperm capacitation"/>
    <property type="evidence" value="ECO:0000315"/>
    <property type="project" value="MGI"/>
</dbReference>
<dbReference type="GO" id="GO:0030382">
    <property type="term" value="P:sperm mitochondrion organization"/>
    <property type="evidence" value="ECO:0000315"/>
    <property type="project" value="MGI"/>
</dbReference>
<dbReference type="GO" id="GO:0007286">
    <property type="term" value="P:spermatid development"/>
    <property type="evidence" value="ECO:0000315"/>
    <property type="project" value="MGI"/>
</dbReference>
<dbReference type="GO" id="GO:0048515">
    <property type="term" value="P:spermatid differentiation"/>
    <property type="evidence" value="ECO:0000315"/>
    <property type="project" value="UniProtKB"/>
</dbReference>
<dbReference type="GO" id="GO:0048729">
    <property type="term" value="P:tissue morphogenesis"/>
    <property type="evidence" value="ECO:0000315"/>
    <property type="project" value="UniProtKB"/>
</dbReference>
<dbReference type="CDD" id="cd01850">
    <property type="entry name" value="CDC_Septin"/>
    <property type="match status" value="1"/>
</dbReference>
<dbReference type="FunFam" id="3.40.50.300:FF:000064">
    <property type="entry name" value="Septin 4"/>
    <property type="match status" value="1"/>
</dbReference>
<dbReference type="Gene3D" id="3.40.50.300">
    <property type="entry name" value="P-loop containing nucleotide triphosphate hydrolases"/>
    <property type="match status" value="1"/>
</dbReference>
<dbReference type="InterPro" id="IPR030379">
    <property type="entry name" value="G_SEPTIN_dom"/>
</dbReference>
<dbReference type="InterPro" id="IPR027417">
    <property type="entry name" value="P-loop_NTPase"/>
</dbReference>
<dbReference type="InterPro" id="IPR016491">
    <property type="entry name" value="Septin"/>
</dbReference>
<dbReference type="PANTHER" id="PTHR18884">
    <property type="entry name" value="SEPTIN"/>
    <property type="match status" value="1"/>
</dbReference>
<dbReference type="Pfam" id="PF00735">
    <property type="entry name" value="Septin"/>
    <property type="match status" value="1"/>
</dbReference>
<dbReference type="SUPFAM" id="SSF52540">
    <property type="entry name" value="P-loop containing nucleoside triphosphate hydrolases"/>
    <property type="match status" value="1"/>
</dbReference>
<dbReference type="PROSITE" id="PS51719">
    <property type="entry name" value="G_SEPTIN"/>
    <property type="match status" value="1"/>
</dbReference>
<sequence>MDHSLGWQGNSVPEDGTEAGIKHFLEDSSDDAELSKFVKDFPGSEPYHSAESKTRVARPQILEPRPQSPDLCDDDVEFRGSLWPQPSDSQQYFSAPAPLSPSSRPRSPWGKLDPYDSSEDDKEYVGFATLPNQVHRKSVKKGFDFTLMVAGESGLGKSTLVNSLFLTDLYRDRKLLGAEERIMQTVEITKHAVDIEEKGVRLRLTIVDTPGFGDAVNNTECWKPVAEYIDQQFEQYFRDESGLNRKNIQDNRVHCCLYFISPFGHGLRPLDVEFMKALHQRVNIVPILAKADTLTPPEVDRKKCKIREEIEHFGIKIYQFPDCDSDEDEDFKLQDQALKESIPFAVIGSNTVVEARGRRVRGRLYPWGIVEVENPGHCDFVKLRTMLVRTHMQDLKDVTRETHYENYRAQCIQSMTRLVVKERNRNKLTRESGTDFPIPAVPPGTDPETEKLIREKDEELRRMQEMLHKIQRQMKETH</sequence>
<reference key="1">
    <citation type="journal article" date="1990" name="Eur. J. Neurosci.">
        <title>A collection of cDNA clones with specific expression patterns in mouse brain.</title>
        <authorList>
            <person name="Kato K."/>
        </authorList>
    </citation>
    <scope>NUCLEOTIDE SEQUENCE [LARGE SCALE MRNA] (ISOFORM 1)</scope>
    <scope>TISSUE SPECIFICITY (ISOFORM 1)</scope>
    <source>
        <strain>BALB/cJ</strain>
        <tissue>Brain</tissue>
    </source>
</reference>
<reference key="2">
    <citation type="journal article" date="2003" name="Genes Cells">
        <title>Isolation and expression of a novel mitochondrial septin that interacts with CRMP/CRAM in the developing neurones.</title>
        <authorList>
            <person name="Takahashi S."/>
            <person name="Inatome R."/>
            <person name="Yamamura H."/>
            <person name="Yanagi S."/>
        </authorList>
    </citation>
    <scope>NUCLEOTIDE SEQUENCE [MRNA] (ISOFORM 4)</scope>
    <scope>INTERACTION WITH DPYSL5 (ISOFORM 4)</scope>
    <scope>SUBCELLULAR LOCATION (ISOFORMS 1 AND 4)</scope>
    <scope>TISSUE SPECIFICITY (ISOFORMS 1 AND 4)</scope>
    <scope>PHOSPHORYLATION (ISOFORM 4)</scope>
    <scope>DEVELOPMENTAL STAGE (ISOFORMS 1 AND 4)</scope>
    <source>
        <tissue>Brain</tissue>
    </source>
</reference>
<reference key="3">
    <citation type="journal article" date="2005" name="Science">
        <title>The transcriptional landscape of the mammalian genome.</title>
        <authorList>
            <person name="Carninci P."/>
            <person name="Kasukawa T."/>
            <person name="Katayama S."/>
            <person name="Gough J."/>
            <person name="Frith M.C."/>
            <person name="Maeda N."/>
            <person name="Oyama R."/>
            <person name="Ravasi T."/>
            <person name="Lenhard B."/>
            <person name="Wells C."/>
            <person name="Kodzius R."/>
            <person name="Shimokawa K."/>
            <person name="Bajic V.B."/>
            <person name="Brenner S.E."/>
            <person name="Batalov S."/>
            <person name="Forrest A.R."/>
            <person name="Zavolan M."/>
            <person name="Davis M.J."/>
            <person name="Wilming L.G."/>
            <person name="Aidinis V."/>
            <person name="Allen J.E."/>
            <person name="Ambesi-Impiombato A."/>
            <person name="Apweiler R."/>
            <person name="Aturaliya R.N."/>
            <person name="Bailey T.L."/>
            <person name="Bansal M."/>
            <person name="Baxter L."/>
            <person name="Beisel K.W."/>
            <person name="Bersano T."/>
            <person name="Bono H."/>
            <person name="Chalk A.M."/>
            <person name="Chiu K.P."/>
            <person name="Choudhary V."/>
            <person name="Christoffels A."/>
            <person name="Clutterbuck D.R."/>
            <person name="Crowe M.L."/>
            <person name="Dalla E."/>
            <person name="Dalrymple B.P."/>
            <person name="de Bono B."/>
            <person name="Della Gatta G."/>
            <person name="di Bernardo D."/>
            <person name="Down T."/>
            <person name="Engstrom P."/>
            <person name="Fagiolini M."/>
            <person name="Faulkner G."/>
            <person name="Fletcher C.F."/>
            <person name="Fukushima T."/>
            <person name="Furuno M."/>
            <person name="Futaki S."/>
            <person name="Gariboldi M."/>
            <person name="Georgii-Hemming P."/>
            <person name="Gingeras T.R."/>
            <person name="Gojobori T."/>
            <person name="Green R.E."/>
            <person name="Gustincich S."/>
            <person name="Harbers M."/>
            <person name="Hayashi Y."/>
            <person name="Hensch T.K."/>
            <person name="Hirokawa N."/>
            <person name="Hill D."/>
            <person name="Huminiecki L."/>
            <person name="Iacono M."/>
            <person name="Ikeo K."/>
            <person name="Iwama A."/>
            <person name="Ishikawa T."/>
            <person name="Jakt M."/>
            <person name="Kanapin A."/>
            <person name="Katoh M."/>
            <person name="Kawasawa Y."/>
            <person name="Kelso J."/>
            <person name="Kitamura H."/>
            <person name="Kitano H."/>
            <person name="Kollias G."/>
            <person name="Krishnan S.P."/>
            <person name="Kruger A."/>
            <person name="Kummerfeld S.K."/>
            <person name="Kurochkin I.V."/>
            <person name="Lareau L.F."/>
            <person name="Lazarevic D."/>
            <person name="Lipovich L."/>
            <person name="Liu J."/>
            <person name="Liuni S."/>
            <person name="McWilliam S."/>
            <person name="Madan Babu M."/>
            <person name="Madera M."/>
            <person name="Marchionni L."/>
            <person name="Matsuda H."/>
            <person name="Matsuzawa S."/>
            <person name="Miki H."/>
            <person name="Mignone F."/>
            <person name="Miyake S."/>
            <person name="Morris K."/>
            <person name="Mottagui-Tabar S."/>
            <person name="Mulder N."/>
            <person name="Nakano N."/>
            <person name="Nakauchi H."/>
            <person name="Ng P."/>
            <person name="Nilsson R."/>
            <person name="Nishiguchi S."/>
            <person name="Nishikawa S."/>
            <person name="Nori F."/>
            <person name="Ohara O."/>
            <person name="Okazaki Y."/>
            <person name="Orlando V."/>
            <person name="Pang K.C."/>
            <person name="Pavan W.J."/>
            <person name="Pavesi G."/>
            <person name="Pesole G."/>
            <person name="Petrovsky N."/>
            <person name="Piazza S."/>
            <person name="Reed J."/>
            <person name="Reid J.F."/>
            <person name="Ring B.Z."/>
            <person name="Ringwald M."/>
            <person name="Rost B."/>
            <person name="Ruan Y."/>
            <person name="Salzberg S.L."/>
            <person name="Sandelin A."/>
            <person name="Schneider C."/>
            <person name="Schoenbach C."/>
            <person name="Sekiguchi K."/>
            <person name="Semple C.A."/>
            <person name="Seno S."/>
            <person name="Sessa L."/>
            <person name="Sheng Y."/>
            <person name="Shibata Y."/>
            <person name="Shimada H."/>
            <person name="Shimada K."/>
            <person name="Silva D."/>
            <person name="Sinclair B."/>
            <person name="Sperling S."/>
            <person name="Stupka E."/>
            <person name="Sugiura K."/>
            <person name="Sultana R."/>
            <person name="Takenaka Y."/>
            <person name="Taki K."/>
            <person name="Tammoja K."/>
            <person name="Tan S.L."/>
            <person name="Tang S."/>
            <person name="Taylor M.S."/>
            <person name="Tegner J."/>
            <person name="Teichmann S.A."/>
            <person name="Ueda H.R."/>
            <person name="van Nimwegen E."/>
            <person name="Verardo R."/>
            <person name="Wei C.L."/>
            <person name="Yagi K."/>
            <person name="Yamanishi H."/>
            <person name="Zabarovsky E."/>
            <person name="Zhu S."/>
            <person name="Zimmer A."/>
            <person name="Hide W."/>
            <person name="Bult C."/>
            <person name="Grimmond S.M."/>
            <person name="Teasdale R.D."/>
            <person name="Liu E.T."/>
            <person name="Brusic V."/>
            <person name="Quackenbush J."/>
            <person name="Wahlestedt C."/>
            <person name="Mattick J.S."/>
            <person name="Hume D.A."/>
            <person name="Kai C."/>
            <person name="Sasaki D."/>
            <person name="Tomaru Y."/>
            <person name="Fukuda S."/>
            <person name="Kanamori-Katayama M."/>
            <person name="Suzuki M."/>
            <person name="Aoki J."/>
            <person name="Arakawa T."/>
            <person name="Iida J."/>
            <person name="Imamura K."/>
            <person name="Itoh M."/>
            <person name="Kato T."/>
            <person name="Kawaji H."/>
            <person name="Kawagashira N."/>
            <person name="Kawashima T."/>
            <person name="Kojima M."/>
            <person name="Kondo S."/>
            <person name="Konno H."/>
            <person name="Nakano K."/>
            <person name="Ninomiya N."/>
            <person name="Nishio T."/>
            <person name="Okada M."/>
            <person name="Plessy C."/>
            <person name="Shibata K."/>
            <person name="Shiraki T."/>
            <person name="Suzuki S."/>
            <person name="Tagami M."/>
            <person name="Waki K."/>
            <person name="Watahiki A."/>
            <person name="Okamura-Oho Y."/>
            <person name="Suzuki H."/>
            <person name="Kawai J."/>
            <person name="Hayashizaki Y."/>
        </authorList>
    </citation>
    <scope>NUCLEOTIDE SEQUENCE [LARGE SCALE MRNA] (ISOFORMS 1; 5 AND 6)</scope>
    <source>
        <strain>C57BL/6J</strain>
        <tissue>Cerebellum</tissue>
        <tissue>Embryo</tissue>
    </source>
</reference>
<reference key="4">
    <citation type="journal article" date="2009" name="PLoS Biol.">
        <title>Lineage-specific biology revealed by a finished genome assembly of the mouse.</title>
        <authorList>
            <person name="Church D.M."/>
            <person name="Goodstadt L."/>
            <person name="Hillier L.W."/>
            <person name="Zody M.C."/>
            <person name="Goldstein S."/>
            <person name="She X."/>
            <person name="Bult C.J."/>
            <person name="Agarwala R."/>
            <person name="Cherry J.L."/>
            <person name="DiCuccio M."/>
            <person name="Hlavina W."/>
            <person name="Kapustin Y."/>
            <person name="Meric P."/>
            <person name="Maglott D."/>
            <person name="Birtle Z."/>
            <person name="Marques A.C."/>
            <person name="Graves T."/>
            <person name="Zhou S."/>
            <person name="Teague B."/>
            <person name="Potamousis K."/>
            <person name="Churas C."/>
            <person name="Place M."/>
            <person name="Herschleb J."/>
            <person name="Runnheim R."/>
            <person name="Forrest D."/>
            <person name="Amos-Landgraf J."/>
            <person name="Schwartz D.C."/>
            <person name="Cheng Z."/>
            <person name="Lindblad-Toh K."/>
            <person name="Eichler E.E."/>
            <person name="Ponting C.P."/>
        </authorList>
    </citation>
    <scope>NUCLEOTIDE SEQUENCE [LARGE SCALE GENOMIC DNA]</scope>
    <scope>ALTERNATIVE SPLICING</scope>
    <source>
        <strain>C57BL/6J</strain>
    </source>
</reference>
<reference key="5">
    <citation type="submission" date="2005-07" db="EMBL/GenBank/DDBJ databases">
        <authorList>
            <person name="Mural R.J."/>
            <person name="Adams M.D."/>
            <person name="Myers E.W."/>
            <person name="Smith H.O."/>
            <person name="Venter J.C."/>
        </authorList>
    </citation>
    <scope>NUCLEOTIDE SEQUENCE [LARGE SCALE GENOMIC DNA]</scope>
</reference>
<reference key="6">
    <citation type="journal article" date="2004" name="Genome Res.">
        <title>The status, quality, and expansion of the NIH full-length cDNA project: the Mammalian Gene Collection (MGC).</title>
        <authorList>
            <consortium name="The MGC Project Team"/>
        </authorList>
    </citation>
    <scope>NUCLEOTIDE SEQUENCE [LARGE SCALE MRNA] (ISOFORM 3)</scope>
    <source>
        <tissue>Brain</tissue>
    </source>
</reference>
<reference key="7">
    <citation type="submission" date="2007-04" db="UniProtKB">
        <authorList>
            <person name="Lubec G."/>
            <person name="Kang S.U."/>
        </authorList>
    </citation>
    <scope>PROTEIN SEQUENCE OF 282-290</scope>
    <scope>IDENTIFICATION BY MASS SPECTROMETRY</scope>
    <source>
        <strain>C57BL/6J</strain>
        <tissue>Brain</tissue>
    </source>
</reference>
<reference key="8">
    <citation type="journal article" date="2005" name="Dev. Cell">
        <title>Cortical organization by the septin cytoskeleton is essential for structural and mechanical integrity of mammalian spermatozoa.</title>
        <authorList>
            <person name="Ihara M."/>
            <person name="Kinoshita A."/>
            <person name="Yamada S."/>
            <person name="Tanaka H."/>
            <person name="Tanigaki A."/>
            <person name="Kitano A."/>
            <person name="Goto M."/>
            <person name="Okubo K."/>
            <person name="Nishiyama H."/>
            <person name="Ogawa O."/>
            <person name="Takahashi C."/>
            <person name="Itohara S."/>
            <person name="Nishimune Y."/>
            <person name="Noda M."/>
            <person name="Kinoshita M."/>
        </authorList>
    </citation>
    <scope>FUNCTION</scope>
    <scope>SUBCELLULAR LOCATION</scope>
    <scope>DISRUPTION PHENOTYPE</scope>
</reference>
<reference key="9">
    <citation type="journal article" date="2005" name="Dev. Cell">
        <title>The Sept4 septin locus is required for sperm terminal differentiation in mice.</title>
        <authorList>
            <person name="Kissel H."/>
            <person name="Georgescu M.M."/>
            <person name="Larisch S."/>
            <person name="Manova K."/>
            <person name="Hunnicutt G.R."/>
            <person name="Steller H."/>
        </authorList>
    </citation>
    <scope>FUNCTION</scope>
    <scope>DISRUPTION PHENOTYPE</scope>
    <scope>TISSUE SPECIFICITY (ISOFORMS 1 AND 5)</scope>
    <scope>ALTERNATIVE SPLICING</scope>
    <scope>SUBCELLULAR LOCATION</scope>
</reference>
<reference key="10">
    <citation type="journal article" date="2006" name="Mol. Cell. Proteomics">
        <title>Comprehensive identification of phosphorylation sites in postsynaptic density preparations.</title>
        <authorList>
            <person name="Trinidad J.C."/>
            <person name="Specht C.G."/>
            <person name="Thalhammer A."/>
            <person name="Schoepfer R."/>
            <person name="Burlingame A.L."/>
        </authorList>
    </citation>
    <scope>PHOSPHORYLATION [LARGE SCALE ANALYSIS] AT SER-68</scope>
    <scope>IDENTIFICATION BY MASS SPECTROMETRY [LARGE SCALE ANALYSIS]</scope>
    <source>
        <tissue>Brain</tissue>
    </source>
</reference>
<reference key="11">
    <citation type="journal article" date="2007" name="Hum. Mutat.">
        <title>SEPT9 sequence alternations causing hereditary neuralgic amyotrophy are associated with altered interactions with SEPT4/SEPT11 and resistance to Rho/Rhotekin-signaling.</title>
        <authorList>
            <person name="Sudo K."/>
            <person name="Ito H."/>
            <person name="Iwamoto I."/>
            <person name="Morishita R."/>
            <person name="Asano T."/>
            <person name="Nagata K."/>
        </authorList>
    </citation>
    <scope>SUBCELLULAR LOCATION</scope>
</reference>
<reference key="12">
    <citation type="journal article" date="2007" name="Neuron">
        <title>Sept4, a component of presynaptic scaffold and Lewy bodies, is required for the suppression of alpha-synuclein neurotoxicity.</title>
        <authorList>
            <person name="Ihara M."/>
            <person name="Yamasaki N."/>
            <person name="Hagiwara A."/>
            <person name="Tanigaki A."/>
            <person name="Kitano A."/>
            <person name="Hikawa R."/>
            <person name="Tomimoto H."/>
            <person name="Noda M."/>
            <person name="Takanashi M."/>
            <person name="Mori H."/>
            <person name="Hattori N."/>
            <person name="Miyakawa T."/>
            <person name="Kinoshita M."/>
        </authorList>
    </citation>
    <scope>FUNCTION</scope>
    <scope>INTERACTION WITH SLC6A3; SNCA AND STX1A</scope>
    <scope>SUBCELLULAR LOCATION</scope>
    <scope>TISSUE SPECIFICITY</scope>
    <scope>DISRUPTION PHENOTYPE</scope>
</reference>
<reference key="13">
    <citation type="journal article" date="2007" name="Proc. Natl. Acad. Sci. U.S.A.">
        <title>Large-scale phosphorylation analysis of mouse liver.</title>
        <authorList>
            <person name="Villen J."/>
            <person name="Beausoleil S.A."/>
            <person name="Gerber S.A."/>
            <person name="Gygi S.P."/>
        </authorList>
    </citation>
    <scope>PHOSPHORYLATION [LARGE SCALE ANALYSIS] AT SER-325</scope>
    <scope>IDENTIFICATION BY MASS SPECTROMETRY [LARGE SCALE ANALYSIS]</scope>
    <source>
        <tissue>Liver</tissue>
    </source>
</reference>
<reference key="14">
    <citation type="journal article" date="2008" name="Neuroscience">
        <title>The Down syndrome candidate dual-specificity tyrosine phosphorylation-regulated kinase 1A phosphorylates the neurodegeneration-related septin 4.</title>
        <authorList>
            <person name="Sitz J.H."/>
            <person name="Baumgaertel K."/>
            <person name="Haemmerle B."/>
            <person name="Papadopoulos C."/>
            <person name="Hekerman P."/>
            <person name="Tejedor F.J."/>
            <person name="Becker W."/>
            <person name="Lutz B."/>
        </authorList>
    </citation>
    <scope>INTERACTION WITH DYRK1A</scope>
    <scope>TISSUE SPECIFICITY</scope>
    <scope>PHOSPHORYLATION</scope>
</reference>
<reference key="15">
    <citation type="journal article" date="2010" name="Cell">
        <title>A tissue-specific atlas of mouse protein phosphorylation and expression.</title>
        <authorList>
            <person name="Huttlin E.L."/>
            <person name="Jedrychowski M.P."/>
            <person name="Elias J.E."/>
            <person name="Goswami T."/>
            <person name="Rad R."/>
            <person name="Beausoleil S.A."/>
            <person name="Villen J."/>
            <person name="Haas W."/>
            <person name="Sowa M.E."/>
            <person name="Gygi S.P."/>
        </authorList>
    </citation>
    <scope>PHOSPHORYLATION [LARGE SCALE ANALYSIS] AT SER-28; SER-29; SER-68; SER-117; SER-118; SER-325; SER-432 AND THR-434</scope>
    <scope>IDENTIFICATION BY MASS SPECTROMETRY [LARGE SCALE ANALYSIS]</scope>
    <source>
        <tissue>Brain</tissue>
        <tissue>Brown adipose tissue</tissue>
        <tissue>Heart</tissue>
        <tissue>Kidney</tissue>
        <tissue>Liver</tissue>
        <tissue>Lung</tissue>
        <tissue>Spleen</tissue>
        <tissue>Testis</tissue>
    </source>
</reference>
<reference key="16">
    <citation type="journal article" date="2010" name="Genes Dev.">
        <title>Sept4/ARTS is required for stem cell apoptosis and tumor suppression.</title>
        <authorList>
            <person name="Garcia-Fernandez M."/>
            <person name="Kissel H."/>
            <person name="Brown S."/>
            <person name="Gorenc T."/>
            <person name="Schile A.J."/>
            <person name="Rafii S."/>
            <person name="Larisch S."/>
            <person name="Steller H."/>
        </authorList>
    </citation>
    <scope>FUNCTION</scope>
    <scope>DISRUPTION PHENOTYPE</scope>
</reference>
<reference key="17">
    <citation type="journal article" date="2010" name="Mol. Biol. Cell">
        <title>Septin 14 is involved in cortical neuronal migration via interaction with Septin 4.</title>
        <authorList>
            <person name="Shinoda T."/>
            <person name="Ito H."/>
            <person name="Sudo K."/>
            <person name="Iwamoto I."/>
            <person name="Morishita R."/>
            <person name="Nagata K."/>
        </authorList>
    </citation>
    <scope>FUNCTION</scope>
    <scope>INTERACTION WITH SEPTIN14</scope>
    <scope>SUBCELLULAR LOCATION</scope>
    <scope>DEVELOPMENTAL STAGE</scope>
</reference>
<reference key="18">
    <citation type="journal article" date="2011" name="Parasitology">
        <title>Dynamics of Sept4 expression in fibrotic livers of mice infected with Schistosoma japonicum.</title>
        <authorList>
            <person name="Duan Y.N."/>
            <person name="Qian H.Y."/>
            <person name="Qin Y.W."/>
            <person name="Zhu D.D."/>
            <person name="He X.X."/>
            <person name="Zhou Q."/>
            <person name="Yang Y.N."/>
            <person name="Bao J."/>
            <person name="Feng J.R."/>
            <person name="Sun W."/>
            <person name="Chen J.L."/>
        </authorList>
    </citation>
    <scope>TISSUE SPECIFICITY</scope>
    <scope>INDUCTION BY S.JAPONICUM INFECTION</scope>
</reference>
<reference key="19">
    <citation type="journal article" date="2013" name="J. Biol. Chem.">
        <title>Identification of a novel anti-apoptotic E3 ubiquitin ligase that ubiquitinates antagonists of inhibitor of apoptosis proteins SMAC, HtrA2, and ARTS.</title>
        <authorList>
            <person name="Kim J.B."/>
            <person name="Kim S.Y."/>
            <person name="Kim B.M."/>
            <person name="Lee H."/>
            <person name="Kim I."/>
            <person name="Yun J."/>
            <person name="Jo Y."/>
            <person name="Oh T."/>
            <person name="Jo Y."/>
            <person name="Chae H.D."/>
            <person name="Shin D.Y."/>
        </authorList>
    </citation>
    <scope>INTERACTION WITH AREL1</scope>
</reference>
<reference key="20">
    <citation type="journal article" date="2013" name="Science">
        <title>Sept4/ARTS regulates stem cell apoptosis and skin regeneration.</title>
        <authorList>
            <person name="Fuchs Y."/>
            <person name="Brown S."/>
            <person name="Gorenc T."/>
            <person name="Rodriguez J."/>
            <person name="Fuchs E."/>
            <person name="Steller H."/>
        </authorList>
    </citation>
    <scope>FUNCTION</scope>
    <scope>TISSUE SPECIFICITY</scope>
    <scope>DISRUPTION PHENOTYPE</scope>
</reference>
<reference key="21">
    <citation type="journal article" date="2016" name="Sci. Rep.">
        <title>A critical role of solute carrier 22a14 in sperm motility and male fertility in mice.</title>
        <authorList>
            <person name="Maruyama S.Y."/>
            <person name="Ito M."/>
            <person name="Ikami Y."/>
            <person name="Okitsu Y."/>
            <person name="Ito C."/>
            <person name="Toshimori K."/>
            <person name="Fujii W."/>
            <person name="Yogo K."/>
        </authorList>
    </citation>
    <scope>SUBCELLULAR LOCATION</scope>
</reference>
<reference key="22">
    <citation type="journal article" date="2018" name="Nat. Commun.">
        <title>ARTS mediates apoptosis and regeneration of the intestinal stem cell niche.</title>
        <authorList>
            <person name="Koren E."/>
            <person name="Yosefzon Y."/>
            <person name="Ankawa R."/>
            <person name="Soteriou D."/>
            <person name="Jacob A."/>
            <person name="Nevelsky A."/>
            <person name="Ben-Yosef R."/>
            <person name="Bar-Sela G."/>
            <person name="Fuchs Y."/>
        </authorList>
    </citation>
    <scope>FUNCTION</scope>
    <scope>INTERACTION WITH XIAP</scope>
    <scope>TISSUE SPECIFICITY</scope>
    <scope>DISRUPTION PHENOTYPE</scope>
</reference>
<name>SEPT4_MOUSE</name>
<proteinExistence type="evidence at protein level"/>
<protein>
    <recommendedName>
        <fullName evidence="25">Septin-4</fullName>
    </recommendedName>
    <alternativeName>
        <fullName evidence="1">Bradeion beta</fullName>
    </alternativeName>
    <alternativeName>
        <fullName evidence="20">Brain protein H5</fullName>
    </alternativeName>
    <alternativeName>
        <fullName evidence="1">CE5B3 beta</fullName>
    </alternativeName>
    <alternativeName>
        <fullName evidence="1">Cell division control-related protein 2</fullName>
        <shortName evidence="1">hCDCREL-2</shortName>
    </alternativeName>
    <alternativeName>
        <fullName evidence="1">Peanut-like protein 2</fullName>
    </alternativeName>
</protein>
<feature type="chain" id="PRO_0000173520" description="Septin-4">
    <location>
        <begin position="1"/>
        <end position="478"/>
    </location>
</feature>
<feature type="domain" description="Septin-type G" evidence="4">
    <location>
        <begin position="141"/>
        <end position="414"/>
    </location>
</feature>
<feature type="region of interest" description="Disordered" evidence="5">
    <location>
        <begin position="1"/>
        <end position="115"/>
    </location>
</feature>
<feature type="region of interest" description="G1 motif" evidence="4">
    <location>
        <begin position="151"/>
        <end position="158"/>
    </location>
</feature>
<feature type="region of interest" description="G3 motif" evidence="4">
    <location>
        <begin position="208"/>
        <end position="211"/>
    </location>
</feature>
<feature type="region of interest" description="G4 motif" evidence="4">
    <location>
        <begin position="289"/>
        <end position="292"/>
    </location>
</feature>
<feature type="region of interest" description="Disordered" evidence="5">
    <location>
        <begin position="428"/>
        <end position="449"/>
    </location>
</feature>
<feature type="coiled-coil region" evidence="3">
    <location>
        <begin position="447"/>
        <end position="478"/>
    </location>
</feature>
<feature type="compositionally biased region" description="Polar residues" evidence="5">
    <location>
        <begin position="84"/>
        <end position="93"/>
    </location>
</feature>
<feature type="compositionally biased region" description="Low complexity" evidence="5">
    <location>
        <begin position="94"/>
        <end position="108"/>
    </location>
</feature>
<feature type="binding site" evidence="2">
    <location>
        <begin position="151"/>
        <end position="158"/>
    </location>
    <ligand>
        <name>GTP</name>
        <dbReference type="ChEBI" id="CHEBI:37565"/>
    </ligand>
</feature>
<feature type="binding site" evidence="2">
    <location>
        <position position="185"/>
    </location>
    <ligand>
        <name>GTP</name>
        <dbReference type="ChEBI" id="CHEBI:37565"/>
    </ligand>
</feature>
<feature type="binding site" evidence="2">
    <location>
        <begin position="290"/>
        <end position="298"/>
    </location>
    <ligand>
        <name>GTP</name>
        <dbReference type="ChEBI" id="CHEBI:37565"/>
    </ligand>
</feature>
<feature type="binding site" evidence="2">
    <location>
        <position position="348"/>
    </location>
    <ligand>
        <name>GTP</name>
        <dbReference type="ChEBI" id="CHEBI:37565"/>
    </ligand>
</feature>
<feature type="binding site" evidence="2">
    <location>
        <position position="363"/>
    </location>
    <ligand>
        <name>GTP</name>
        <dbReference type="ChEBI" id="CHEBI:37565"/>
    </ligand>
</feature>
<feature type="modified residue" description="Phosphoserine" evidence="28">
    <location>
        <position position="28"/>
    </location>
</feature>
<feature type="modified residue" description="Phosphoserine" evidence="28">
    <location>
        <position position="29"/>
    </location>
</feature>
<feature type="modified residue" description="Phosphoserine" evidence="26 28">
    <location>
        <position position="68"/>
    </location>
</feature>
<feature type="modified residue" description="Phosphoserine" evidence="28">
    <location>
        <position position="117"/>
    </location>
</feature>
<feature type="modified residue" description="Phosphoserine" evidence="28">
    <location>
        <position position="118"/>
    </location>
</feature>
<feature type="modified residue" description="Phosphoserine" evidence="27 28">
    <location>
        <position position="325"/>
    </location>
</feature>
<feature type="modified residue" description="Phosphoserine" evidence="28">
    <location>
        <position position="432"/>
    </location>
</feature>
<feature type="modified residue" description="Phosphothreonine" evidence="28">
    <location>
        <position position="434"/>
    </location>
</feature>
<feature type="splice variant" id="VSP_061408" description="In isoform 7.">
    <original>MDHSLGWQGNSVPEDGTEAGIKHFLEDSSDDAELSKFVKDFPGSEPYHSAESKTRVARPQILEPRPQSPDLCDDDVEFRGSLWPQPSDSQQYFSAPAPLSPSSRPRSPWGKLDPYDSSEDDKEYVGFATLPNQVHRKSVKKGFDFTLMVAGESGLGKSTLVNSLFLTDLYRDRKLLGAEERIMQTVEITKHAVDIEEKGVRLRLTIVDTPGFGDAVNNTECWKPVAEYIDQQFEQYFRDESGLNRKNIQDNRVHCCLYFISPFGHGLRPLDVEFMKALHQRVNIVPILAKADTLTPPEVDRKKCKIREEIEHFGIKIYQFPDCDSDEDEDFKLQDQALKESIPFAVIGSNTVVEARGRRVRGRLYPWGIVEVENPGHCDFVKLRTMLVRTHMQDLKDVTRETHYENYRAQCIQSMTRLVVKERNRNKLTRESGTDFPIPAVPPGTDPETEKLIREKDEELRRMQEMLHKIQRQMKETH</original>
    <variation>MASTQKATVYQVYKTNKNGSKVAVSSHRGAEVTTSTPQRGHGYYSSSQRATAAVSLSPPPLPSQRRAEATSTTHHSTSDYLHPVSPQPGPGLSAVSTSRGTETRTRIEVPCHHSPHHSPHHSPHHSPHRKNQSIQTMSSHLAGVHRNVSPVREESTRRTETRPGREVAHHSSTTSDAKCRHLYFTGEKEEDPPSKVQNPQGVKVPRRISAYPKDEAIQTEPTRRTTAEVRSSRNISVQEHGIRMANNPQIVIRKVPPQEPEVGHSSIYSEPKTSQKSTKLSSGLKLSVLRDLDGAPRAAPPRPERSVCIGTKPSPKILISEAENTMRSPTREREVTRKVTISPGKQSTQPPHRVTCRTVSEGSYKSPLYPELSTKPSTHVPSAFELTPRPLPPRSLPRYGPDCSWWALLNPKVETPPNHSSFDLEPKSPPPLDPLESFYEMDSTPFCEDLLFQRDKASLPPSPKDSLYRVPLTEVQKTPKYTSKQPTQGFNAFFLDVSEEMYNRILWWLKGLCFPFLGGGGGVGGREGLGKGFGEG</variation>
    <location>
        <begin position="1"/>
        <end position="478"/>
    </location>
</feature>
<feature type="splice variant" id="VSP_038307" description="In isoform 5." evidence="23">
    <location>
        <begin position="1"/>
        <end position="118"/>
    </location>
</feature>
<feature type="splice variant" id="VSP_038308" description="In isoform 2 and isoform 6." evidence="23">
    <original>MDHSLGWQGNSVPEDGTEAG</original>
    <variation>M</variation>
    <location>
        <begin position="1"/>
        <end position="20"/>
    </location>
</feature>
<feature type="splice variant" id="VSP_038309" description="In isoform 4." evidence="20">
    <location>
        <begin position="21"/>
        <end position="119"/>
    </location>
</feature>
<feature type="splice variant" id="VSP_038310" description="In isoform 5." evidence="23">
    <original>E</original>
    <variation>M</variation>
    <location>
        <position position="119"/>
    </location>
</feature>
<feature type="splice variant" id="VSP_038311" description="In isoform 6." evidence="23">
    <original>CWK</original>
    <variation>WYV</variation>
    <location>
        <begin position="221"/>
        <end position="223"/>
    </location>
</feature>
<feature type="splice variant" id="VSP_038312" description="In isoform 6." evidence="23">
    <location>
        <begin position="224"/>
        <end position="478"/>
    </location>
</feature>
<feature type="splice variant" id="VSP_038313" description="In isoform 3 and isoform 5." evidence="21 23">
    <original>NKLTRE</original>
    <variation>KDRSRN</variation>
    <location>
        <begin position="426"/>
        <end position="431"/>
    </location>
</feature>
<feature type="splice variant" id="VSP_038314" description="In isoform 3 and isoform 5." evidence="21 23">
    <location>
        <begin position="432"/>
        <end position="478"/>
    </location>
</feature>
<feature type="sequence conflict" description="In Ref. 3; BAE21934." evidence="24" ref="3">
    <original>D</original>
    <variation>N</variation>
    <location>
        <position position="394"/>
    </location>
</feature>
<gene>
    <name evidence="25" type="primary">Septin4</name>
    <name evidence="25" type="synonym">Bh5</name>
    <name evidence="25" type="synonym">Gm11492</name>
    <name evidence="25" type="synonym">Pnutl2</name>
    <name evidence="1" type="synonym">Sep4</name>
    <name evidence="25" type="synonym">Sept4</name>
</gene>
<keyword id="KW-0025">Alternative splicing</keyword>
<keyword id="KW-0131">Cell cycle</keyword>
<keyword id="KW-0132">Cell division</keyword>
<keyword id="KW-0966">Cell projection</keyword>
<keyword id="KW-0969">Cilium</keyword>
<keyword id="KW-0175">Coiled coil</keyword>
<keyword id="KW-0963">Cytoplasm</keyword>
<keyword id="KW-0968">Cytoplasmic vesicle</keyword>
<keyword id="KW-0221">Differentiation</keyword>
<keyword id="KW-0903">Direct protein sequencing</keyword>
<keyword id="KW-0282">Flagellum</keyword>
<keyword id="KW-0342">GTP-binding</keyword>
<keyword id="KW-0496">Mitochondrion</keyword>
<keyword id="KW-0547">Nucleotide-binding</keyword>
<keyword id="KW-0597">Phosphoprotein</keyword>
<keyword id="KW-1185">Reference proteome</keyword>
<keyword id="KW-0744">Spermatogenesis</keyword>
<keyword id="KW-0770">Synapse</keyword>
<keyword id="KW-0832">Ubl conjugation</keyword>
<comment type="function">
    <text evidence="8 9 10 13 14 17 19 24">Filament-forming cytoskeletal GTPase (Probable). Pro-apoptotic protein involved in LGR5-positive intestinal stem cell and Paneth cell expansion in the intestines, via its interaction with XIAP (PubMed:30389919). May also play a role in the regulation of cell fate in the intestine (PubMed:30389919). Positive regulator of apoptosis involved in hematopoietic stem cell homeostasis; via its interaction with XIAP (PubMed:20952537). Negative regulator of repair and hair follicle regeneration in response to injury, due to inhibition of hair follicle stem cell proliferation, potentially via its interaction with XIAP (PubMed:23788729). Plays an important role in male fertility and sperm motility (PubMed:15737930, PubMed:15737931). During spermiogenesis, essential for the establishment of the annulus (a fibrous ring structure connecting the midpiece and the principal piece of the sperm flagellum) which is a requisite for the structural and mechanical integrity of the sperm (PubMed:15737930, PubMed:15737931). Involved in the migration of cortical neurons and the formation of neuron leading processes during embryonic development (PubMed:20181826). Required for dopaminergic metabolism in presynaptic autoreceptors; potentially via activity as a presynaptic scaffold protein (PubMed:17296554).</text>
</comment>
<comment type="subunit">
    <text evidence="1 10 12 13 16 19">Septins polymerize into heterooligomeric protein complexes that form filaments, and can associate with cellular membranes, actin filaments and microtubules. GTPase activity is required for filament formation. Interacts with SEPTIN8 (By similarity). Component of a septin core octameric complex consisting of SEPTIN12, SEPTIN7, SEPTIN6 and SEPTIN2 or SEPTIN4 in the order 12-7-6-2-2-6-7-12 or 12-7-6-4-4-6-7-12 (By similarity). Interacts with SEPTIN14 (via C-terminus) (PubMed:20181826). Interacts with DYRK1A (PubMed:18938227). Interacts with SLC6A3/DAT and SNCA/alpha-synuclein (PubMed:17296554). Interacts with STX1A; in the striatum (PubMed:17296554). Interacts with XIAP (via BIR3 domain) following the induction of apoptosis (PubMed:30389919). Interacts with AREL1 (via HECT domain); in the cytoplasm following induction of apoptosis (PubMed:23479728).</text>
</comment>
<comment type="subunit">
    <molecule>Isoform 4</molecule>
    <text evidence="7">Interacts with DPYSL5.</text>
</comment>
<comment type="subcellular location">
    <subcellularLocation>
        <location evidence="11 13">Cytoplasm</location>
    </subcellularLocation>
    <subcellularLocation>
        <location evidence="8 9 18">Cell projection</location>
        <location evidence="8 9 18">Cilium</location>
        <location evidence="8 9 18">Flagellum</location>
    </subcellularLocation>
    <subcellularLocation>
        <location evidence="1">Cytoplasmic vesicle</location>
        <location evidence="1">Secretory vesicle</location>
    </subcellularLocation>
    <subcellularLocation>
        <location evidence="10 13">Cell projection</location>
        <location evidence="10 13">Axon</location>
    </subcellularLocation>
    <subcellularLocation>
        <location evidence="13">Cell projection</location>
        <location evidence="13">Dendrite</location>
    </subcellularLocation>
    <subcellularLocation>
        <location evidence="13">Perikaryon</location>
    </subcellularLocation>
    <subcellularLocation>
        <location evidence="1">Synapse</location>
    </subcellularLocation>
    <text evidence="1 8 9 10 18">Found in the sperm annulus, a fibrous ring structure connecting the midpiece and the principal piece of the sperm flagellum (PubMed:15737930, PubMed:15737931, PubMed:27811987). In platelets, found in areas surrounding alpha-granules (By similarity). Expressed and colocalized with SLC6A3 and SNCA in axon terminals, especially at the varicosities (PubMed:17296554).</text>
</comment>
<comment type="subcellular location">
    <molecule>Isoform 1</molecule>
    <subcellularLocation>
        <location evidence="7">Cytoplasm</location>
    </subcellularLocation>
</comment>
<comment type="subcellular location">
    <molecule>Isoform 4</molecule>
    <subcellularLocation>
        <location evidence="7">Mitochondrion</location>
    </subcellularLocation>
    <subcellularLocation>
        <location evidence="7">Cytoplasm</location>
        <location evidence="7">Cytosol</location>
    </subcellularLocation>
    <text evidence="7">In retinoic acid-treated P19 cells, found first in the mitochondria and at later times, as neuronal differentiation proceeds, in the cytosol.</text>
</comment>
<comment type="alternative products">
    <event type="alternative splicing"/>
    <isoform>
        <id>P28661-1</id>
        <name>1</name>
        <name evidence="20 22">H5</name>
        <sequence type="displayed"/>
    </isoform>
    <isoform>
        <id>P28661-2</id>
        <name>2</name>
        <name evidence="22">Cdcrel-2b</name>
        <sequence type="described" ref="VSP_038308"/>
    </isoform>
    <isoform>
        <id>P28661-3</id>
        <name>3</name>
        <sequence type="described" ref="VSP_038313 VSP_038314"/>
    </isoform>
    <isoform>
        <id>P28661-4</id>
        <name>4</name>
        <name>Mitochondrial septin</name>
        <name evidence="22">M-septin</name>
        <sequence type="described" ref="VSP_038309"/>
    </isoform>
    <isoform>
        <id>P28661-5</id>
        <name>5</name>
        <name evidence="22 23">ARTS</name>
        <sequence type="described" ref="VSP_038307 VSP_038310 VSP_038313 VSP_038314"/>
    </isoform>
    <isoform>
        <id>P28661-6</id>
        <name>6</name>
        <sequence type="described" ref="VSP_038308 VSP_038311 VSP_038312"/>
    </isoform>
    <isoform>
        <id>P28661-7</id>
        <name>7</name>
        <sequence type="described" ref="VSP_061408"/>
    </isoform>
</comment>
<comment type="tissue specificity">
    <text evidence="10 15 17 19">Expressed in the cerebral cortex, striatum, midbrain, cerebellum and spinal cord (at protein level). Expressed in the substantia nigra pars compacta, ventral tegmental area, projection fiber bundles and in axon terminals surrounding striatal neurons (at protein level) (PubMed:17296554). Expressed in hair follicle stem cells (at protein level) (PubMed:23788729). Expressed in small intestinal crypts; abundantly expressed at the crypt base (at protein level) (PubMed:30389919). Widely expressed in the brain and to a lesser extent in the testis, lung and liver (PubMed:17296554, PubMed:21679490).</text>
</comment>
<comment type="tissue specificity">
    <molecule>Isoform 1</molecule>
    <text evidence="6 7 9 12">Highly expressed in the brain and testis and, to a lesser extent in the heart, lung and kidney (PubMed:12106288, PubMed:12581152, PubMed:15737931). In the brain, abundant in areas of high cell density, particularly in the stria terminalis (PubMed:12106288). Expressed in the entorhinal, temporal and visual cortices and the hippocampus of the brain where is colocalizes with DYRK1A in postnatal day 1 and adult mice. Expressed and extensively colocalizes with DYRK1A in apical dendrites of pyramidal cells (PubMed:18938227).</text>
</comment>
<comment type="tissue specificity">
    <molecule>Isoform 4</molecule>
    <text evidence="7">Predominantly expressed in embryonic brain and dorsal root ganglion neurons.</text>
</comment>
<comment type="tissue specificity">
    <molecule>Isoform 5</molecule>
    <text evidence="9 19">Expressed in LGR5-positive intestinal stem cells and lysozyme-positive Paneth cells (at protein level) (PubMed:30389919). Expressed in the brain and testis (PubMed:15737931).</text>
</comment>
<comment type="developmental stage">
    <text evidence="13">Expressed in the intermediate zone and cortical plate of the cortex at 15.5 dpc.</text>
</comment>
<comment type="developmental stage">
    <molecule>Isoform 1</molecule>
    <text evidence="7">Widely expressed in embryos at 7 dpc.</text>
</comment>
<comment type="developmental stage">
    <molecule>Isoform 4</molecule>
    <text evidence="7">Predominantly expressed in the brain at 14 dpc and on postnatal day 1.</text>
</comment>
<comment type="induction">
    <text evidence="15">Induced by S.japonicum egg-mediated liver fibrosis at the site of egg granulomas; expression peaks at 12 weeks post infection with expression decreasing thereafter.</text>
</comment>
<comment type="PTM">
    <text evidence="12">Phosphorylated by DYRK1A.</text>
</comment>
<comment type="PTM">
    <text evidence="1">Ubiquitinated by AREL1.</text>
</comment>
<comment type="PTM">
    <molecule>Isoform 4</molecule>
    <text evidence="7">May be phosphorylated.</text>
</comment>
<comment type="disruption phenotype">
    <text evidence="8 9 10 14 17 19">Knockout mice have a decreased basal prepulse startle response and an enhanced acoustic startle response (PubMed:17296554). Decreased concentration of TH and SLC6A3/DAT in dopaminergic axons and axon terminals, does not affect axon morphology (PubMed:17296554). Male mice are sterile due to immotile and structurally defective sperm (PubMed:15737930, PubMed:15737931). Sperms exhibit defective mitochondrial architecture, bent and nonmotile tails, absence of the annulus (a fibrous ring structure connecting the midpiece and the principal piece of the sperm flagellum), lower ATP consumption, impaired capacitation and defects in the removal of residual cytoplasm (PubMed:15737930, PubMed:15737931). Increased in intestinal crypt diameter, length and cell number (PubMed:30389919). Decreased apoptosis and increased maintenance of colon crypt architecture in response to intestinal barrier damage, as a result of improved Lgr5-positive intestinal stem cell-mediated regeneration (PubMed:30389919). Decrease in differentiated intestinal goblet cells (PubMed:30389919). Increase proliferation of Lgr5-positive intestinal stem cells and lysozyme-positive granular Paneth cells in the crypt base of both the small and large intestines (PubMed:30389919). Increase in Reg4-positive cells in colon epithelium and nuclear localization of CTNNB1 in cells of the intestinal crypt base (PubMed:30389919). Increased incidence of spontaneous hematopoietic malignancies, splenomegaly and a third of mice developed spontaneous neoplasia at 11 to 15 months old (PubMed:20952537). Increased number of B-linage progenitors, immature B cells and increased functional hematopoietic progenitor cells in the bone marrow of 6 to 13 week old mice, increased hematopoietic progenitor cell levels persisted in 11 to 15 month old mice (PubMed:20952537). Normal hair follicle bulge morphology but twice as many epithelial progenitor cells and an elongated tail epithelial strand (PubMed:23788729). Significantly improved dorsal skin wound repair which included an increased amount of proliferating hair follicle stem cells in the wound bed (PubMed:23788729). Decrease in apoptosis of hematopoietic progenitors in response to irradiation (PubMed:20952537). SEPTIN4 and XIAP double knockout mice show no differences in apoptosis or lymphoproliferation in hematopoietic stem and progenitor cells (PubMed:20952537). Delayed dermal wound repair and hair follicle regeneration, via increased apoptosis of hair follicle stem cells (PubMed:23788729).</text>
</comment>
<comment type="miscellaneous">
    <text evidence="14">May act as a tumor suppressor in both hematopoietic and neoplastic malignancies.</text>
</comment>
<comment type="similarity">
    <text evidence="4">Belongs to the TRAFAC class TrmE-Era-EngA-EngB-Septin-like GTPase superfamily. Septin GTPase family.</text>
</comment>